<comment type="function">
    <text evidence="4">Transcription factor that plays a critical role in innate immunity by activating expression of type I interferon (IFN) IFNA and INFB and inflammatory cytokines downstream of endolysosomal toll-like receptors TLR7, TLR8 and TLR9 (PubMed:15665823). Regulates the transcription of type I IFN genes (IFN-alpha and IFN-beta) and IFN-stimulated genes (ISG) by binding to an interferon-stimulated response element (ISRE) in their promoters (PubMed:15665823). Can efficiently activate both the IFN-beta (IFNB) and the IFN-alpha (IFNA) genes and mediate their induction downstream of the TLR-activated, MyD88-dependent pathway (PubMed:15665823).</text>
</comment>
<comment type="activity regulation">
    <text evidence="1 6">Maintained as a monomer in an autoinhibited state (PubMed:25326420). Phosphorylation and activation follow the following steps: innate adapter protein TASL recruits IRF5, thereby licensing IRF5 for phosphorylation by IKBKB (By similarity). Phosphorylated IRF5 dissociates from the adapter proteins, dimerizes, and then enters the nucleus to induce IFNs (PubMed:25326420).</text>
</comment>
<comment type="subunit">
    <text evidence="1 4 6">Homodimer, when phosphorylated (PubMed:25326420). Interacts with TASL (via pLxIS motif); interaction takes place downstream of TLR7, TLR8 or TLR9, leading to its activation (By similarity). Interacts with MYD88 and TRAF6 (PubMed:15665823).</text>
</comment>
<comment type="subcellular location">
    <subcellularLocation>
        <location evidence="4 5 6">Cytoplasm</location>
    </subcellularLocation>
    <subcellularLocation>
        <location evidence="4 5 6">Nucleus</location>
    </subcellularLocation>
    <text evidence="4 6">Shuttles between the nucleus and the cytoplasm: upon activation by the TLR adapter MYD88 and subsequent phosphorylation, translocates to the nucleus.</text>
</comment>
<comment type="PTM">
    <text evidence="6">Phosphorylation of serine and threonine residues by IKBKB in a C-terminal autoinhibitory region, stimulates dimerization, transport into the nucleus, assembly with the coactivator CBP/EP300 and initiation of transcription.</text>
</comment>
<comment type="PTM">
    <text evidence="5">'Lys-63'-linked polyubiquitination by TRAF6 is required for activation.</text>
</comment>
<comment type="disruption phenotype">
    <text evidence="4">Mice develop normally and no overt phenotype is observed in hematopoietic cell population (PubMed:15665823). However, the induction of pro-inflammatory cytokines, such as interleukin-6 (IL6) and IL12 by various TLR ligands is impaired, whereas interferon-alpha induction is normal (PubMed:15665823).</text>
</comment>
<comment type="similarity">
    <text evidence="2">Belongs to the IRF family.</text>
</comment>
<protein>
    <recommendedName>
        <fullName evidence="7 8">Interferon regulatory factor 5</fullName>
        <shortName evidence="7 8">IRF-5</shortName>
    </recommendedName>
</protein>
<keyword id="KW-0051">Antiviral defense</keyword>
<keyword id="KW-0963">Cytoplasm</keyword>
<keyword id="KW-0238">DNA-binding</keyword>
<keyword id="KW-0391">Immunity</keyword>
<keyword id="KW-0395">Inflammatory response</keyword>
<keyword id="KW-0399">Innate immunity</keyword>
<keyword id="KW-1017">Isopeptide bond</keyword>
<keyword id="KW-0539">Nucleus</keyword>
<keyword id="KW-0597">Phosphoprotein</keyword>
<keyword id="KW-1185">Reference proteome</keyword>
<keyword id="KW-0804">Transcription</keyword>
<keyword id="KW-0805">Transcription regulation</keyword>
<keyword id="KW-0832">Ubl conjugation</keyword>
<reference key="1">
    <citation type="submission" date="1997-11" db="EMBL/GenBank/DDBJ databases">
        <title>Generation of mutant mice deficient in IRF5.</title>
        <authorList>
            <person name="Grossman A."/>
            <person name="Kondo S."/>
            <person name="Antonio L."/>
            <person name="Mak T.W."/>
        </authorList>
    </citation>
    <scope>NUCLEOTIDE SEQUENCE [MRNA]</scope>
    <source>
        <strain>C57BL/6J</strain>
        <tissue>Lymph node</tissue>
    </source>
</reference>
<reference key="2">
    <citation type="journal article" date="2005" name="Nature">
        <title>Integral role of IRF-5 in the gene induction programme activated by Toll-like receptors.</title>
        <authorList>
            <person name="Takaoka A."/>
            <person name="Yanai H."/>
            <person name="Kondo S."/>
            <person name="Duncan G."/>
            <person name="Negishi H."/>
            <person name="Mizutani T."/>
            <person name="Kano S."/>
            <person name="Honda K."/>
            <person name="Ohba Y."/>
            <person name="Mak T.W."/>
            <person name="Taniguchi T."/>
        </authorList>
    </citation>
    <scope>FUNCTION</scope>
    <scope>SUBCELLULAR LOCATION</scope>
    <scope>INTERACTION WITH MYD88 AND TRAF6</scope>
    <scope>DISRUPTION PHENOTYPE</scope>
</reference>
<reference key="3">
    <citation type="journal article" date="2008" name="Mol. Cell. Biol.">
        <title>Functional regulation of MyD88-activated interferon regulatory factor 5 by K63-linked polyubiquitination.</title>
        <authorList>
            <person name="Balkhi M.Y."/>
            <person name="Fitzgerald K.A."/>
            <person name="Pitha P.M."/>
        </authorList>
    </citation>
    <scope>UBIQUITINATION AT LYS-410 AND LYS-411 BY TRAF6</scope>
    <scope>SUBCELLULAR LOCATION</scope>
</reference>
<reference key="4">
    <citation type="journal article" date="2010" name="Cell">
        <title>A tissue-specific atlas of mouse protein phosphorylation and expression.</title>
        <authorList>
            <person name="Huttlin E.L."/>
            <person name="Jedrychowski M.P."/>
            <person name="Elias J.E."/>
            <person name="Goswami T."/>
            <person name="Rad R."/>
            <person name="Beausoleil S.A."/>
            <person name="Villen J."/>
            <person name="Haas W."/>
            <person name="Sowa M.E."/>
            <person name="Gygi S.P."/>
        </authorList>
    </citation>
    <scope>IDENTIFICATION BY MASS SPECTROMETRY [LARGE SCALE ANALYSIS]</scope>
    <source>
        <tissue>Spleen</tissue>
    </source>
</reference>
<reference key="5">
    <citation type="journal article" date="2014" name="Proc. Natl. Acad. Sci. U.S.A.">
        <title>IKKbeta is an IRF5 kinase that instigates inflammation.</title>
        <authorList>
            <person name="Ren J."/>
            <person name="Chen X."/>
            <person name="Chen Z.J."/>
        </authorList>
    </citation>
    <scope>ACTIVITY REGULATION</scope>
    <scope>SUBCELLULAR LOCATION</scope>
    <scope>SUBUNIT</scope>
    <scope>PHOSPHORYLATION AT SER-430; SER-434; SER-436 AND SER-445</scope>
    <scope>MUTAGENESIS OF SER-434 AND SER-445</scope>
</reference>
<gene>
    <name evidence="7 8 9" type="primary">Irf5</name>
</gene>
<name>IRF5_MOUSE</name>
<sequence length="497" mass="56005">MNHSAPGIPPPPRRVRLKPWLVAQVNSCQYPGLQWVNGEKKLFYIPWRHATRHGPSQDGDNTIFKAWAKETGKYTEGVDEADPAKWKANLRCALNKSRDFQLFYDGPRDMPPQPYKIYEVCSNGPAPTESQPTDDYVLGEEEEEEEEELQRMLPGLSITEPALPGPPNAPYSLPKEDTKWPPALQPPVGLGPPVPDPNLLAPPSGNPAGFRQLLPEVLEPGPLASSQPPTEPLLPDLLISPHMLPLTDLEIKFQYRGRAPRTLTISNPQGCRLFYSQLEATQEQVELFGPVTLEQVRFPSPEDIPSDKQRFYTNQLLDVLDRGLILQLQGQDLYAIRLCQCKVFWSGPCALAHGSCPNPIQREVKTKLFSLEQFLNELILFQKGQTNTPPPFEIFFCFGEEWPDVKPREKKLITVQVVPVAARLLLEMFSGELSWSADSIRLQISNPDLKDHMVEQFKELHHLWQSQQQLQPMVQAPPVAGLDASQGPWPMHPVGMQ</sequence>
<proteinExistence type="evidence at protein level"/>
<dbReference type="EMBL" id="AF028725">
    <property type="protein sequence ID" value="AAB81997.1"/>
    <property type="molecule type" value="mRNA"/>
</dbReference>
<dbReference type="CCDS" id="CCDS19962.1"/>
<dbReference type="RefSeq" id="NP_001239311.1">
    <property type="nucleotide sequence ID" value="NM_001252382.1"/>
</dbReference>
<dbReference type="RefSeq" id="NP_036187.1">
    <property type="nucleotide sequence ID" value="NM_012057.4"/>
</dbReference>
<dbReference type="RefSeq" id="XP_006505160.1">
    <property type="nucleotide sequence ID" value="XM_006505097.3"/>
</dbReference>
<dbReference type="SMR" id="P56477"/>
<dbReference type="BioGRID" id="205111">
    <property type="interactions" value="7"/>
</dbReference>
<dbReference type="DIP" id="DIP-49382N"/>
<dbReference type="FunCoup" id="P56477">
    <property type="interactions" value="1769"/>
</dbReference>
<dbReference type="IntAct" id="P56477">
    <property type="interactions" value="4"/>
</dbReference>
<dbReference type="STRING" id="10090.ENSMUSP00000127021"/>
<dbReference type="GlyGen" id="P56477">
    <property type="glycosylation" value="2 sites, 1 O-linked glycan (1 site)"/>
</dbReference>
<dbReference type="iPTMnet" id="P56477"/>
<dbReference type="PhosphoSitePlus" id="P56477"/>
<dbReference type="PaxDb" id="10090-ENSMUSP00000004392"/>
<dbReference type="PeptideAtlas" id="P56477"/>
<dbReference type="ProteomicsDB" id="269332"/>
<dbReference type="Pumba" id="P56477"/>
<dbReference type="Antibodypedia" id="17820">
    <property type="antibodies" value="634 antibodies from 44 providers"/>
</dbReference>
<dbReference type="DNASU" id="27056"/>
<dbReference type="Ensembl" id="ENSMUST00000004392.12">
    <property type="protein sequence ID" value="ENSMUSP00000004392.6"/>
    <property type="gene ID" value="ENSMUSG00000029771.13"/>
</dbReference>
<dbReference type="Ensembl" id="ENSMUST00000163511.7">
    <property type="protein sequence ID" value="ENSMUSP00000127021.2"/>
    <property type="gene ID" value="ENSMUSG00000029771.13"/>
</dbReference>
<dbReference type="GeneID" id="27056"/>
<dbReference type="KEGG" id="mmu:27056"/>
<dbReference type="UCSC" id="uc009bdu.2">
    <property type="organism name" value="mouse"/>
</dbReference>
<dbReference type="AGR" id="MGI:1350924"/>
<dbReference type="CTD" id="3663"/>
<dbReference type="MGI" id="MGI:1350924">
    <property type="gene designation" value="Irf5"/>
</dbReference>
<dbReference type="VEuPathDB" id="HostDB:ENSMUSG00000029771"/>
<dbReference type="eggNOG" id="ENOG502QSKM">
    <property type="taxonomic scope" value="Eukaryota"/>
</dbReference>
<dbReference type="GeneTree" id="ENSGT00940000159926"/>
<dbReference type="HOGENOM" id="CLU_031544_0_0_1"/>
<dbReference type="InParanoid" id="P56477"/>
<dbReference type="OMA" id="FQYRGQP"/>
<dbReference type="OrthoDB" id="9856880at2759"/>
<dbReference type="PhylomeDB" id="P56477"/>
<dbReference type="TreeFam" id="TF328512"/>
<dbReference type="Reactome" id="R-MMU-9860276">
    <property type="pathway name" value="SLC15A4:TASL-dependent IRF5 activation"/>
</dbReference>
<dbReference type="BioGRID-ORCS" id="27056">
    <property type="hits" value="4 hits in 81 CRISPR screens"/>
</dbReference>
<dbReference type="PRO" id="PR:P56477"/>
<dbReference type="Proteomes" id="UP000000589">
    <property type="component" value="Chromosome 6"/>
</dbReference>
<dbReference type="RNAct" id="P56477">
    <property type="molecule type" value="protein"/>
</dbReference>
<dbReference type="Bgee" id="ENSMUSG00000029771">
    <property type="expression patterns" value="Expressed in mesenteric lymph node and 147 other cell types or tissues"/>
</dbReference>
<dbReference type="ExpressionAtlas" id="P56477">
    <property type="expression patterns" value="baseline and differential"/>
</dbReference>
<dbReference type="GO" id="GO:0005737">
    <property type="term" value="C:cytoplasm"/>
    <property type="evidence" value="ECO:0000314"/>
    <property type="project" value="UniProtKB"/>
</dbReference>
<dbReference type="GO" id="GO:0005634">
    <property type="term" value="C:nucleus"/>
    <property type="evidence" value="ECO:0000314"/>
    <property type="project" value="UniProtKB"/>
</dbReference>
<dbReference type="GO" id="GO:0001228">
    <property type="term" value="F:DNA-binding transcription activator activity, RNA polymerase II-specific"/>
    <property type="evidence" value="ECO:0007669"/>
    <property type="project" value="Ensembl"/>
</dbReference>
<dbReference type="GO" id="GO:0000981">
    <property type="term" value="F:DNA-binding transcription factor activity, RNA polymerase II-specific"/>
    <property type="evidence" value="ECO:0000314"/>
    <property type="project" value="UniProtKB"/>
</dbReference>
<dbReference type="GO" id="GO:0042802">
    <property type="term" value="F:identical protein binding"/>
    <property type="evidence" value="ECO:0007669"/>
    <property type="project" value="Ensembl"/>
</dbReference>
<dbReference type="GO" id="GO:0019901">
    <property type="term" value="F:protein kinase binding"/>
    <property type="evidence" value="ECO:0000353"/>
    <property type="project" value="UniProtKB"/>
</dbReference>
<dbReference type="GO" id="GO:0120283">
    <property type="term" value="F:protein serine/threonine kinase binding"/>
    <property type="evidence" value="ECO:0007669"/>
    <property type="project" value="Ensembl"/>
</dbReference>
<dbReference type="GO" id="GO:0000976">
    <property type="term" value="F:transcription cis-regulatory region binding"/>
    <property type="evidence" value="ECO:0007669"/>
    <property type="project" value="InterPro"/>
</dbReference>
<dbReference type="GO" id="GO:0071225">
    <property type="term" value="P:cellular response to muramyl dipeptide"/>
    <property type="evidence" value="ECO:0007669"/>
    <property type="project" value="Ensembl"/>
</dbReference>
<dbReference type="GO" id="GO:0071224">
    <property type="term" value="P:cellular response to peptidoglycan"/>
    <property type="evidence" value="ECO:0007669"/>
    <property type="project" value="Ensembl"/>
</dbReference>
<dbReference type="GO" id="GO:0098586">
    <property type="term" value="P:cellular response to virus"/>
    <property type="evidence" value="ECO:0007669"/>
    <property type="project" value="Ensembl"/>
</dbReference>
<dbReference type="GO" id="GO:0019221">
    <property type="term" value="P:cytokine-mediated signaling pathway"/>
    <property type="evidence" value="ECO:0000314"/>
    <property type="project" value="UniProtKB"/>
</dbReference>
<dbReference type="GO" id="GO:0051607">
    <property type="term" value="P:defense response to virus"/>
    <property type="evidence" value="ECO:0000315"/>
    <property type="project" value="UniProtKB"/>
</dbReference>
<dbReference type="GO" id="GO:0006954">
    <property type="term" value="P:inflammatory response"/>
    <property type="evidence" value="ECO:0007669"/>
    <property type="project" value="UniProtKB-KW"/>
</dbReference>
<dbReference type="GO" id="GO:0045087">
    <property type="term" value="P:innate immune response"/>
    <property type="evidence" value="ECO:0000314"/>
    <property type="project" value="UniProtKB"/>
</dbReference>
<dbReference type="GO" id="GO:0070431">
    <property type="term" value="P:nucleotide-binding oligomerization domain containing 2 signaling pathway"/>
    <property type="evidence" value="ECO:0007669"/>
    <property type="project" value="Ensembl"/>
</dbReference>
<dbReference type="GO" id="GO:0043065">
    <property type="term" value="P:positive regulation of apoptotic process"/>
    <property type="evidence" value="ECO:0007669"/>
    <property type="project" value="Ensembl"/>
</dbReference>
<dbReference type="GO" id="GO:0002720">
    <property type="term" value="P:positive regulation of cytokine production involved in immune response"/>
    <property type="evidence" value="ECO:0007669"/>
    <property type="project" value="Ensembl"/>
</dbReference>
<dbReference type="GO" id="GO:0032727">
    <property type="term" value="P:positive regulation of interferon-alpha production"/>
    <property type="evidence" value="ECO:0007669"/>
    <property type="project" value="Ensembl"/>
</dbReference>
<dbReference type="GO" id="GO:0032728">
    <property type="term" value="P:positive regulation of interferon-beta production"/>
    <property type="evidence" value="ECO:0007669"/>
    <property type="project" value="Ensembl"/>
</dbReference>
<dbReference type="GO" id="GO:0032735">
    <property type="term" value="P:positive regulation of interleukin-12 production"/>
    <property type="evidence" value="ECO:0007669"/>
    <property type="project" value="Ensembl"/>
</dbReference>
<dbReference type="GO" id="GO:0045944">
    <property type="term" value="P:positive regulation of transcription by RNA polymerase II"/>
    <property type="evidence" value="ECO:0000314"/>
    <property type="project" value="UniProtKB"/>
</dbReference>
<dbReference type="GO" id="GO:0032481">
    <property type="term" value="P:positive regulation of type I interferon production"/>
    <property type="evidence" value="ECO:0000250"/>
    <property type="project" value="UniProtKB"/>
</dbReference>
<dbReference type="CDD" id="cd00103">
    <property type="entry name" value="IRF"/>
    <property type="match status" value="1"/>
</dbReference>
<dbReference type="FunFam" id="2.60.200.10:FF:000003">
    <property type="entry name" value="Interferon regulatory factor 5"/>
    <property type="match status" value="1"/>
</dbReference>
<dbReference type="FunFam" id="1.10.10.10:FF:000093">
    <property type="entry name" value="Putative interferon regulatory factor 6"/>
    <property type="match status" value="1"/>
</dbReference>
<dbReference type="Gene3D" id="2.60.200.10">
    <property type="match status" value="1"/>
</dbReference>
<dbReference type="Gene3D" id="1.10.10.10">
    <property type="entry name" value="Winged helix-like DNA-binding domain superfamily/Winged helix DNA-binding domain"/>
    <property type="match status" value="1"/>
</dbReference>
<dbReference type="InterPro" id="IPR019817">
    <property type="entry name" value="Interferon_reg_fac_CS"/>
</dbReference>
<dbReference type="InterPro" id="IPR001346">
    <property type="entry name" value="Interferon_reg_fact_DNA-bd_dom"/>
</dbReference>
<dbReference type="InterPro" id="IPR019471">
    <property type="entry name" value="Interferon_reg_factor-3"/>
</dbReference>
<dbReference type="InterPro" id="IPR017855">
    <property type="entry name" value="SMAD-like_dom_sf"/>
</dbReference>
<dbReference type="InterPro" id="IPR008984">
    <property type="entry name" value="SMAD_FHA_dom_sf"/>
</dbReference>
<dbReference type="InterPro" id="IPR036388">
    <property type="entry name" value="WH-like_DNA-bd_sf"/>
</dbReference>
<dbReference type="InterPro" id="IPR036390">
    <property type="entry name" value="WH_DNA-bd_sf"/>
</dbReference>
<dbReference type="PANTHER" id="PTHR11949">
    <property type="entry name" value="INTERFERON REGULATORY FACTOR"/>
    <property type="match status" value="1"/>
</dbReference>
<dbReference type="PANTHER" id="PTHR11949:SF10">
    <property type="entry name" value="INTERFERON REGULATORY FACTOR 5"/>
    <property type="match status" value="1"/>
</dbReference>
<dbReference type="Pfam" id="PF00605">
    <property type="entry name" value="IRF"/>
    <property type="match status" value="1"/>
</dbReference>
<dbReference type="Pfam" id="PF10401">
    <property type="entry name" value="IRF-3"/>
    <property type="match status" value="1"/>
</dbReference>
<dbReference type="PRINTS" id="PR00267">
    <property type="entry name" value="INTFRNREGFCT"/>
</dbReference>
<dbReference type="SMART" id="SM00348">
    <property type="entry name" value="IRF"/>
    <property type="match status" value="1"/>
</dbReference>
<dbReference type="SMART" id="SM01243">
    <property type="entry name" value="IRF-3"/>
    <property type="match status" value="1"/>
</dbReference>
<dbReference type="SUPFAM" id="SSF49879">
    <property type="entry name" value="SMAD/FHA domain"/>
    <property type="match status" value="1"/>
</dbReference>
<dbReference type="SUPFAM" id="SSF46785">
    <property type="entry name" value="Winged helix' DNA-binding domain"/>
    <property type="match status" value="1"/>
</dbReference>
<dbReference type="PROSITE" id="PS00601">
    <property type="entry name" value="IRF_1"/>
    <property type="match status" value="1"/>
</dbReference>
<dbReference type="PROSITE" id="PS51507">
    <property type="entry name" value="IRF_2"/>
    <property type="match status" value="1"/>
</dbReference>
<organism>
    <name type="scientific">Mus musculus</name>
    <name type="common">Mouse</name>
    <dbReference type="NCBI Taxonomy" id="10090"/>
    <lineage>
        <taxon>Eukaryota</taxon>
        <taxon>Metazoa</taxon>
        <taxon>Chordata</taxon>
        <taxon>Craniata</taxon>
        <taxon>Vertebrata</taxon>
        <taxon>Euteleostomi</taxon>
        <taxon>Mammalia</taxon>
        <taxon>Eutheria</taxon>
        <taxon>Euarchontoglires</taxon>
        <taxon>Glires</taxon>
        <taxon>Rodentia</taxon>
        <taxon>Myomorpha</taxon>
        <taxon>Muroidea</taxon>
        <taxon>Muridae</taxon>
        <taxon>Murinae</taxon>
        <taxon>Mus</taxon>
        <taxon>Mus</taxon>
    </lineage>
</organism>
<feature type="chain" id="PRO_0000154559" description="Interferon regulatory factor 5">
    <location>
        <begin position="1"/>
        <end position="497"/>
    </location>
</feature>
<feature type="DNA-binding region" description="IRF tryptophan pentad repeat" evidence="2">
    <location>
        <begin position="14"/>
        <end position="122"/>
    </location>
</feature>
<feature type="region of interest" description="Disordered" evidence="3">
    <location>
        <begin position="124"/>
        <end position="178"/>
    </location>
</feature>
<feature type="short sequence motif" description="Nuclear localization signal" evidence="1">
    <location>
        <begin position="12"/>
        <end position="18"/>
    </location>
</feature>
<feature type="short sequence motif" description="Nuclear export signal" evidence="1">
    <location>
        <begin position="149"/>
        <end position="159"/>
    </location>
</feature>
<feature type="compositionally biased region" description="Acidic residues" evidence="3">
    <location>
        <begin position="137"/>
        <end position="148"/>
    </location>
</feature>
<feature type="modified residue" description="Phosphoserine; by TBK1" evidence="1">
    <location>
        <position position="157"/>
    </location>
</feature>
<feature type="modified residue" description="Phosphoserine" evidence="1">
    <location>
        <position position="300"/>
    </location>
</feature>
<feature type="modified residue" description="Phosphoserine" evidence="6">
    <location>
        <position position="430"/>
    </location>
</feature>
<feature type="modified residue" description="Phosphoserine; by IKKB" evidence="6">
    <location>
        <position position="434"/>
    </location>
</feature>
<feature type="modified residue" description="Phosphoserine" evidence="6">
    <location>
        <position position="436"/>
    </location>
</feature>
<feature type="modified residue" description="Phosphoserine" evidence="1">
    <location>
        <position position="439"/>
    </location>
</feature>
<feature type="modified residue" description="Phosphoserine; by IKKB" evidence="6">
    <location>
        <position position="445"/>
    </location>
</feature>
<feature type="cross-link" description="Glycyl lysine isopeptide (Lys-Gly) (interchain with G-Cter in ubiquitin)" evidence="5">
    <location>
        <position position="410"/>
    </location>
</feature>
<feature type="cross-link" description="Glycyl lysine isopeptide (Lys-Gly) (interchain with G-Cter in ubiquitin)" evidence="5">
    <location>
        <position position="411"/>
    </location>
</feature>
<feature type="mutagenesis site" description="Reduced homodimerization and subsequent activation." evidence="6">
    <original>S</original>
    <variation>A</variation>
    <location>
        <position position="434"/>
    </location>
</feature>
<feature type="mutagenesis site" description="Abolished homodimerization and subsequent activation." evidence="6">
    <original>S</original>
    <variation>A</variation>
    <location>
        <position position="445"/>
    </location>
</feature>
<evidence type="ECO:0000250" key="1">
    <source>
        <dbReference type="UniProtKB" id="Q13568"/>
    </source>
</evidence>
<evidence type="ECO:0000255" key="2">
    <source>
        <dbReference type="PROSITE-ProRule" id="PRU00840"/>
    </source>
</evidence>
<evidence type="ECO:0000256" key="3">
    <source>
        <dbReference type="SAM" id="MobiDB-lite"/>
    </source>
</evidence>
<evidence type="ECO:0000269" key="4">
    <source>
    </source>
</evidence>
<evidence type="ECO:0000269" key="5">
    <source>
    </source>
</evidence>
<evidence type="ECO:0000269" key="6">
    <source>
    </source>
</evidence>
<evidence type="ECO:0000303" key="7">
    <source>
    </source>
</evidence>
<evidence type="ECO:0000303" key="8">
    <source>
    </source>
</evidence>
<evidence type="ECO:0000312" key="9">
    <source>
        <dbReference type="MGI" id="MGI:1350924"/>
    </source>
</evidence>
<accession>P56477</accession>